<accession>Q9ZJ93</accession>
<sequence length="208" mass="24203">MEVICKHYTPLDIASQAIRTCWQSFEYSDDGGCKDRDLIHRVGNIFRHSSTLEHLYYNFEIKGLSRGALQELSRHRIASLSVKSSRYTLRELKEVESFLPLNETNLERAKEFLVFVDDEKVNEMSVLALENLRVLLSEHNIKNDLAKYAMPESYKTHLAYSINARSLQNLLTLRSSNKALKEMQDLAKALFDALPYEHQYLFEDCLKH</sequence>
<keyword id="KW-0274">FAD</keyword>
<keyword id="KW-0285">Flavoprotein</keyword>
<keyword id="KW-0489">Methyltransferase</keyword>
<keyword id="KW-0521">NADP</keyword>
<keyword id="KW-0545">Nucleotide biosynthesis</keyword>
<keyword id="KW-0808">Transferase</keyword>
<feature type="chain" id="PRO_0000175567" description="Flavin-dependent thymidylate synthase">
    <location>
        <begin position="1"/>
        <end position="208"/>
    </location>
</feature>
<feature type="domain" description="ThyX" evidence="2">
    <location>
        <begin position="1"/>
        <end position="208"/>
    </location>
</feature>
<feature type="short sequence motif" description="ThyX motif" evidence="1">
    <location>
        <begin position="74"/>
        <end position="84"/>
    </location>
</feature>
<feature type="active site" description="Involved in ionization of N3 of dUMP, leading to its activation" evidence="1">
    <location>
        <position position="174"/>
    </location>
</feature>
<feature type="binding site" evidence="1">
    <location>
        <position position="50"/>
    </location>
    <ligand>
        <name>FAD</name>
        <dbReference type="ChEBI" id="CHEBI:57692"/>
        <note>ligand shared between neighboring subunits</note>
    </ligand>
</feature>
<feature type="binding site" evidence="1">
    <location>
        <begin position="71"/>
        <end position="74"/>
    </location>
    <ligand>
        <name>dUMP</name>
        <dbReference type="ChEBI" id="CHEBI:246422"/>
        <note>ligand shared between dimeric partners</note>
    </ligand>
</feature>
<feature type="binding site" evidence="1">
    <location>
        <begin position="74"/>
        <end position="76"/>
    </location>
    <ligand>
        <name>FAD</name>
        <dbReference type="ChEBI" id="CHEBI:57692"/>
        <note>ligand shared between neighboring subunits</note>
    </ligand>
</feature>
<feature type="binding site" description="in other chain" evidence="1">
    <location>
        <begin position="84"/>
        <end position="86"/>
    </location>
    <ligand>
        <name>dUMP</name>
        <dbReference type="ChEBI" id="CHEBI:246422"/>
        <note>ligand shared between dimeric partners</note>
    </ligand>
</feature>
<feature type="binding site" description="in other chain" evidence="1">
    <location>
        <position position="147"/>
    </location>
    <ligand>
        <name>dUMP</name>
        <dbReference type="ChEBI" id="CHEBI:246422"/>
        <note>ligand shared between dimeric partners</note>
    </ligand>
</feature>
<feature type="binding site" evidence="1">
    <location>
        <begin position="163"/>
        <end position="165"/>
    </location>
    <ligand>
        <name>FAD</name>
        <dbReference type="ChEBI" id="CHEBI:57692"/>
        <note>ligand shared between neighboring subunits</note>
    </ligand>
</feature>
<feature type="binding site" evidence="1">
    <location>
        <position position="169"/>
    </location>
    <ligand>
        <name>FAD</name>
        <dbReference type="ChEBI" id="CHEBI:57692"/>
        <note>ligand shared between neighboring subunits</note>
    </ligand>
</feature>
<feature type="binding site" evidence="1">
    <location>
        <position position="174"/>
    </location>
    <ligand>
        <name>dUMP</name>
        <dbReference type="ChEBI" id="CHEBI:246422"/>
        <note>ligand shared between dimeric partners</note>
    </ligand>
</feature>
<reference key="1">
    <citation type="journal article" date="1999" name="Nature">
        <title>Genomic sequence comparison of two unrelated isolates of the human gastric pathogen Helicobacter pylori.</title>
        <authorList>
            <person name="Alm R.A."/>
            <person name="Ling L.-S.L."/>
            <person name="Moir D.T."/>
            <person name="King B.L."/>
            <person name="Brown E.D."/>
            <person name="Doig P.C."/>
            <person name="Smith D.R."/>
            <person name="Noonan B."/>
            <person name="Guild B.C."/>
            <person name="deJonge B.L."/>
            <person name="Carmel G."/>
            <person name="Tummino P.J."/>
            <person name="Caruso A."/>
            <person name="Uria-Nickelsen M."/>
            <person name="Mills D.M."/>
            <person name="Ives C."/>
            <person name="Gibson R."/>
            <person name="Merberg D."/>
            <person name="Mills S.D."/>
            <person name="Jiang Q."/>
            <person name="Taylor D.E."/>
            <person name="Vovis G.F."/>
            <person name="Trust T.J."/>
        </authorList>
    </citation>
    <scope>NUCLEOTIDE SEQUENCE [LARGE SCALE GENOMIC DNA]</scope>
    <source>
        <strain>J99 / ATCC 700824</strain>
    </source>
</reference>
<gene>
    <name evidence="1" type="primary">thyX</name>
    <name type="ordered locus">jhp_1421</name>
</gene>
<proteinExistence type="inferred from homology"/>
<organism>
    <name type="scientific">Helicobacter pylori (strain J99 / ATCC 700824)</name>
    <name type="common">Campylobacter pylori J99</name>
    <dbReference type="NCBI Taxonomy" id="85963"/>
    <lineage>
        <taxon>Bacteria</taxon>
        <taxon>Pseudomonadati</taxon>
        <taxon>Campylobacterota</taxon>
        <taxon>Epsilonproteobacteria</taxon>
        <taxon>Campylobacterales</taxon>
        <taxon>Helicobacteraceae</taxon>
        <taxon>Helicobacter</taxon>
    </lineage>
</organism>
<protein>
    <recommendedName>
        <fullName evidence="1">Flavin-dependent thymidylate synthase</fullName>
        <shortName evidence="1">FDTS</shortName>
        <ecNumber evidence="1">2.1.1.148</ecNumber>
    </recommendedName>
    <alternativeName>
        <fullName evidence="1">FAD-dependent thymidylate synthase</fullName>
    </alternativeName>
    <alternativeName>
        <fullName evidence="1">Thymidylate synthase ThyX</fullName>
        <shortName evidence="1">TS</shortName>
        <shortName evidence="1">TSase</shortName>
    </alternativeName>
</protein>
<evidence type="ECO:0000255" key="1">
    <source>
        <dbReference type="HAMAP-Rule" id="MF_01408"/>
    </source>
</evidence>
<evidence type="ECO:0000255" key="2">
    <source>
        <dbReference type="PROSITE-ProRule" id="PRU00661"/>
    </source>
</evidence>
<comment type="function">
    <text evidence="1">Catalyzes the reductive methylation of 2'-deoxyuridine-5'-monophosphate (dUMP) to 2'-deoxythymidine-5'-monophosphate (dTMP) while utilizing 5,10-methylenetetrahydrofolate (mTHF) as the methyl donor, and NADPH and FADH(2) as the reductant.</text>
</comment>
<comment type="catalytic activity">
    <reaction evidence="1">
        <text>dUMP + (6R)-5,10-methylene-5,6,7,8-tetrahydrofolate + NADPH + H(+) = dTMP + (6S)-5,6,7,8-tetrahydrofolate + NADP(+)</text>
        <dbReference type="Rhea" id="RHEA:29043"/>
        <dbReference type="ChEBI" id="CHEBI:15378"/>
        <dbReference type="ChEBI" id="CHEBI:15636"/>
        <dbReference type="ChEBI" id="CHEBI:57453"/>
        <dbReference type="ChEBI" id="CHEBI:57783"/>
        <dbReference type="ChEBI" id="CHEBI:58349"/>
        <dbReference type="ChEBI" id="CHEBI:63528"/>
        <dbReference type="ChEBI" id="CHEBI:246422"/>
        <dbReference type="EC" id="2.1.1.148"/>
    </reaction>
</comment>
<comment type="cofactor">
    <cofactor evidence="1">
        <name>FAD</name>
        <dbReference type="ChEBI" id="CHEBI:57692"/>
    </cofactor>
    <text evidence="1">Binds 4 FAD per tetramer. Each FAD binding site is formed by three monomers.</text>
</comment>
<comment type="pathway">
    <text evidence="1">Pyrimidine metabolism; dTTP biosynthesis.</text>
</comment>
<comment type="subunit">
    <text evidence="1">Homotetramer.</text>
</comment>
<comment type="similarity">
    <text evidence="1">Belongs to the thymidylate synthase ThyX family.</text>
</comment>
<dbReference type="EC" id="2.1.1.148" evidence="1"/>
<dbReference type="EMBL" id="AE001439">
    <property type="protein sequence ID" value="AAD07000.1"/>
    <property type="molecule type" value="Genomic_DNA"/>
</dbReference>
<dbReference type="PIR" id="A71810">
    <property type="entry name" value="A71810"/>
</dbReference>
<dbReference type="RefSeq" id="WP_000451928.1">
    <property type="nucleotide sequence ID" value="NC_000921.1"/>
</dbReference>
<dbReference type="SMR" id="Q9ZJ93"/>
<dbReference type="KEGG" id="hpj:jhp_1421"/>
<dbReference type="PATRIC" id="fig|85963.30.peg.1126"/>
<dbReference type="eggNOG" id="COG1351">
    <property type="taxonomic scope" value="Bacteria"/>
</dbReference>
<dbReference type="BRENDA" id="2.1.1.148">
    <property type="organism ID" value="2604"/>
</dbReference>
<dbReference type="UniPathway" id="UPA00575"/>
<dbReference type="Proteomes" id="UP000000804">
    <property type="component" value="Chromosome"/>
</dbReference>
<dbReference type="GO" id="GO:0050660">
    <property type="term" value="F:flavin adenine dinucleotide binding"/>
    <property type="evidence" value="ECO:0007669"/>
    <property type="project" value="InterPro"/>
</dbReference>
<dbReference type="GO" id="GO:0070402">
    <property type="term" value="F:NADPH binding"/>
    <property type="evidence" value="ECO:0007669"/>
    <property type="project" value="TreeGrafter"/>
</dbReference>
<dbReference type="GO" id="GO:0050797">
    <property type="term" value="F:thymidylate synthase (FAD) activity"/>
    <property type="evidence" value="ECO:0007669"/>
    <property type="project" value="UniProtKB-UniRule"/>
</dbReference>
<dbReference type="GO" id="GO:0004799">
    <property type="term" value="F:thymidylate synthase activity"/>
    <property type="evidence" value="ECO:0007669"/>
    <property type="project" value="TreeGrafter"/>
</dbReference>
<dbReference type="GO" id="GO:0006231">
    <property type="term" value="P:dTMP biosynthetic process"/>
    <property type="evidence" value="ECO:0007669"/>
    <property type="project" value="UniProtKB-UniRule"/>
</dbReference>
<dbReference type="GO" id="GO:0006235">
    <property type="term" value="P:dTTP biosynthetic process"/>
    <property type="evidence" value="ECO:0007669"/>
    <property type="project" value="UniProtKB-UniRule"/>
</dbReference>
<dbReference type="GO" id="GO:0032259">
    <property type="term" value="P:methylation"/>
    <property type="evidence" value="ECO:0007669"/>
    <property type="project" value="UniProtKB-KW"/>
</dbReference>
<dbReference type="CDD" id="cd20175">
    <property type="entry name" value="ThyX"/>
    <property type="match status" value="1"/>
</dbReference>
<dbReference type="Gene3D" id="3.30.1360.170">
    <property type="match status" value="1"/>
</dbReference>
<dbReference type="HAMAP" id="MF_01408">
    <property type="entry name" value="ThyX"/>
    <property type="match status" value="1"/>
</dbReference>
<dbReference type="InterPro" id="IPR003669">
    <property type="entry name" value="Thymidylate_synthase_ThyX"/>
</dbReference>
<dbReference type="InterPro" id="IPR036098">
    <property type="entry name" value="Thymidylate_synthase_ThyX_sf"/>
</dbReference>
<dbReference type="NCBIfam" id="TIGR02170">
    <property type="entry name" value="thyX"/>
    <property type="match status" value="1"/>
</dbReference>
<dbReference type="PANTHER" id="PTHR34934">
    <property type="entry name" value="FLAVIN-DEPENDENT THYMIDYLATE SYNTHASE"/>
    <property type="match status" value="1"/>
</dbReference>
<dbReference type="PANTHER" id="PTHR34934:SF1">
    <property type="entry name" value="FLAVIN-DEPENDENT THYMIDYLATE SYNTHASE"/>
    <property type="match status" value="1"/>
</dbReference>
<dbReference type="Pfam" id="PF02511">
    <property type="entry name" value="Thy1"/>
    <property type="match status" value="1"/>
</dbReference>
<dbReference type="SUPFAM" id="SSF69796">
    <property type="entry name" value="Thymidylate synthase-complementing protein Thy1"/>
    <property type="match status" value="1"/>
</dbReference>
<dbReference type="PROSITE" id="PS51331">
    <property type="entry name" value="THYX"/>
    <property type="match status" value="1"/>
</dbReference>
<name>THYX_HELPJ</name>